<proteinExistence type="inferred from homology"/>
<name>RNPA_AZOVD</name>
<evidence type="ECO:0000255" key="1">
    <source>
        <dbReference type="HAMAP-Rule" id="MF_00227"/>
    </source>
</evidence>
<organism>
    <name type="scientific">Azotobacter vinelandii (strain DJ / ATCC BAA-1303)</name>
    <dbReference type="NCBI Taxonomy" id="322710"/>
    <lineage>
        <taxon>Bacteria</taxon>
        <taxon>Pseudomonadati</taxon>
        <taxon>Pseudomonadota</taxon>
        <taxon>Gammaproteobacteria</taxon>
        <taxon>Pseudomonadales</taxon>
        <taxon>Pseudomonadaceae</taxon>
        <taxon>Azotobacter</taxon>
    </lineage>
</organism>
<comment type="function">
    <text evidence="1">RNaseP catalyzes the removal of the 5'-leader sequence from pre-tRNA to produce the mature 5'-terminus. It can also cleave other RNA substrates such as 4.5S RNA. The protein component plays an auxiliary but essential role in vivo by binding to the 5'-leader sequence and broadening the substrate specificity of the ribozyme.</text>
</comment>
<comment type="catalytic activity">
    <reaction evidence="1">
        <text>Endonucleolytic cleavage of RNA, removing 5'-extranucleotides from tRNA precursor.</text>
        <dbReference type="EC" id="3.1.26.5"/>
    </reaction>
</comment>
<comment type="subunit">
    <text evidence="1">Consists of a catalytic RNA component (M1 or rnpB) and a protein subunit.</text>
</comment>
<comment type="similarity">
    <text evidence="1">Belongs to the RnpA family.</text>
</comment>
<dbReference type="EC" id="3.1.26.5" evidence="1"/>
<dbReference type="EMBL" id="CP001157">
    <property type="protein sequence ID" value="ACO81317.1"/>
    <property type="molecule type" value="Genomic_DNA"/>
</dbReference>
<dbReference type="RefSeq" id="WP_012703670.1">
    <property type="nucleotide sequence ID" value="NC_012560.1"/>
</dbReference>
<dbReference type="SMR" id="C1DNF9"/>
<dbReference type="STRING" id="322710.Avin_52470"/>
<dbReference type="EnsemblBacteria" id="ACO81317">
    <property type="protein sequence ID" value="ACO81317"/>
    <property type="gene ID" value="Avin_52470"/>
</dbReference>
<dbReference type="GeneID" id="88188054"/>
<dbReference type="KEGG" id="avn:Avin_52470"/>
<dbReference type="eggNOG" id="COG0594">
    <property type="taxonomic scope" value="Bacteria"/>
</dbReference>
<dbReference type="HOGENOM" id="CLU_117179_11_0_6"/>
<dbReference type="OrthoDB" id="9796422at2"/>
<dbReference type="Proteomes" id="UP000002424">
    <property type="component" value="Chromosome"/>
</dbReference>
<dbReference type="GO" id="GO:0030677">
    <property type="term" value="C:ribonuclease P complex"/>
    <property type="evidence" value="ECO:0007669"/>
    <property type="project" value="TreeGrafter"/>
</dbReference>
<dbReference type="GO" id="GO:0042781">
    <property type="term" value="F:3'-tRNA processing endoribonuclease activity"/>
    <property type="evidence" value="ECO:0007669"/>
    <property type="project" value="TreeGrafter"/>
</dbReference>
<dbReference type="GO" id="GO:0004526">
    <property type="term" value="F:ribonuclease P activity"/>
    <property type="evidence" value="ECO:0007669"/>
    <property type="project" value="UniProtKB-UniRule"/>
</dbReference>
<dbReference type="GO" id="GO:0000049">
    <property type="term" value="F:tRNA binding"/>
    <property type="evidence" value="ECO:0007669"/>
    <property type="project" value="UniProtKB-UniRule"/>
</dbReference>
<dbReference type="GO" id="GO:0001682">
    <property type="term" value="P:tRNA 5'-leader removal"/>
    <property type="evidence" value="ECO:0007669"/>
    <property type="project" value="UniProtKB-UniRule"/>
</dbReference>
<dbReference type="Gene3D" id="3.30.230.10">
    <property type="match status" value="1"/>
</dbReference>
<dbReference type="HAMAP" id="MF_00227">
    <property type="entry name" value="RNase_P"/>
    <property type="match status" value="1"/>
</dbReference>
<dbReference type="InterPro" id="IPR020568">
    <property type="entry name" value="Ribosomal_Su5_D2-typ_SF"/>
</dbReference>
<dbReference type="InterPro" id="IPR014721">
    <property type="entry name" value="Ribsml_uS5_D2-typ_fold_subgr"/>
</dbReference>
<dbReference type="InterPro" id="IPR000100">
    <property type="entry name" value="RNase_P"/>
</dbReference>
<dbReference type="NCBIfam" id="TIGR00188">
    <property type="entry name" value="rnpA"/>
    <property type="match status" value="1"/>
</dbReference>
<dbReference type="PANTHER" id="PTHR33992">
    <property type="entry name" value="RIBONUCLEASE P PROTEIN COMPONENT"/>
    <property type="match status" value="1"/>
</dbReference>
<dbReference type="PANTHER" id="PTHR33992:SF1">
    <property type="entry name" value="RIBONUCLEASE P PROTEIN COMPONENT"/>
    <property type="match status" value="1"/>
</dbReference>
<dbReference type="Pfam" id="PF00825">
    <property type="entry name" value="Ribonuclease_P"/>
    <property type="match status" value="1"/>
</dbReference>
<dbReference type="SUPFAM" id="SSF54211">
    <property type="entry name" value="Ribosomal protein S5 domain 2-like"/>
    <property type="match status" value="1"/>
</dbReference>
<sequence length="130" mass="14558">MVSRDFGREKRLLIPRQFKAVFDSPTAKVPGKHVLLLARPNALDHPRLGLVIGKKSVKLSVGRNRLKRLIRESFRLNQDSLAGWDIVVVARKGLGELENTEVTQQFGKLWKRLARSRPQTAVEAAGSSHA</sequence>
<keyword id="KW-0255">Endonuclease</keyword>
<keyword id="KW-0378">Hydrolase</keyword>
<keyword id="KW-0540">Nuclease</keyword>
<keyword id="KW-0694">RNA-binding</keyword>
<keyword id="KW-0819">tRNA processing</keyword>
<reference key="1">
    <citation type="journal article" date="2009" name="J. Bacteriol.">
        <title>Genome sequence of Azotobacter vinelandii, an obligate aerobe specialized to support diverse anaerobic metabolic processes.</title>
        <authorList>
            <person name="Setubal J.C."/>
            <person name="Dos Santos P."/>
            <person name="Goldman B.S."/>
            <person name="Ertesvaag H."/>
            <person name="Espin G."/>
            <person name="Rubio L.M."/>
            <person name="Valla S."/>
            <person name="Almeida N.F."/>
            <person name="Balasubramanian D."/>
            <person name="Cromes L."/>
            <person name="Curatti L."/>
            <person name="Du Z."/>
            <person name="Godsy E."/>
            <person name="Goodner B."/>
            <person name="Hellner-Burris K."/>
            <person name="Hernandez J.A."/>
            <person name="Houmiel K."/>
            <person name="Imperial J."/>
            <person name="Kennedy C."/>
            <person name="Larson T.J."/>
            <person name="Latreille P."/>
            <person name="Ligon L.S."/>
            <person name="Lu J."/>
            <person name="Maerk M."/>
            <person name="Miller N.M."/>
            <person name="Norton S."/>
            <person name="O'Carroll I.P."/>
            <person name="Paulsen I."/>
            <person name="Raulfs E.C."/>
            <person name="Roemer R."/>
            <person name="Rosser J."/>
            <person name="Segura D."/>
            <person name="Slater S."/>
            <person name="Stricklin S.L."/>
            <person name="Studholme D.J."/>
            <person name="Sun J."/>
            <person name="Viana C.J."/>
            <person name="Wallin E."/>
            <person name="Wang B."/>
            <person name="Wheeler C."/>
            <person name="Zhu H."/>
            <person name="Dean D.R."/>
            <person name="Dixon R."/>
            <person name="Wood D."/>
        </authorList>
    </citation>
    <scope>NUCLEOTIDE SEQUENCE [LARGE SCALE GENOMIC DNA]</scope>
    <source>
        <strain>DJ / ATCC BAA-1303</strain>
    </source>
</reference>
<gene>
    <name evidence="1" type="primary">rnpA</name>
    <name type="ordered locus">Avin_52470</name>
</gene>
<accession>C1DNF9</accession>
<feature type="chain" id="PRO_1000204337" description="Ribonuclease P protein component">
    <location>
        <begin position="1"/>
        <end position="130"/>
    </location>
</feature>
<protein>
    <recommendedName>
        <fullName evidence="1">Ribonuclease P protein component</fullName>
        <shortName evidence="1">RNase P protein</shortName>
        <shortName evidence="1">RNaseP protein</shortName>
        <ecNumber evidence="1">3.1.26.5</ecNumber>
    </recommendedName>
    <alternativeName>
        <fullName evidence="1">Protein C5</fullName>
    </alternativeName>
</protein>